<protein>
    <recommendedName>
        <fullName>Protein I267L</fullName>
        <shortName>pI267L</shortName>
    </recommendedName>
</protein>
<keyword id="KW-0244">Early protein</keyword>
<keyword id="KW-0945">Host-virus interaction</keyword>
<keyword id="KW-1090">Inhibition of host innate immune response by virus</keyword>
<keyword id="KW-1088">Inhibition of host RIG-I by virus</keyword>
<keyword id="KW-1113">Inhibition of host RLR pathway by virus</keyword>
<keyword id="KW-0899">Viral immunoevasion</keyword>
<gene>
    <name type="ordered locus">War-147</name>
</gene>
<name>VF267_ASFWA</name>
<dbReference type="EMBL" id="AY261366">
    <property type="status" value="NOT_ANNOTATED_CDS"/>
    <property type="molecule type" value="Genomic_DNA"/>
</dbReference>
<dbReference type="Proteomes" id="UP000000858">
    <property type="component" value="Segment"/>
</dbReference>
<dbReference type="GO" id="GO:0039540">
    <property type="term" value="P:symbiont-mediated suppression of host cytoplasmic pattern recognition receptor signaling pathway via inhibition of RIG-I activity"/>
    <property type="evidence" value="ECO:0007669"/>
    <property type="project" value="UniProtKB-KW"/>
</dbReference>
<reference key="1">
    <citation type="submission" date="2003-03" db="EMBL/GenBank/DDBJ databases">
        <title>African swine fever virus genomes.</title>
        <authorList>
            <person name="Kutish G.F."/>
            <person name="Rock D.L."/>
        </authorList>
    </citation>
    <scope>NUCLEOTIDE SEQUENCE [LARGE SCALE GENOMIC DNA]</scope>
</reference>
<sequence>MLLVLIDVDGFMGQLYNENGTQTILIPREVVIFYWEKNTASKILQLFFHGGIDPIFEKINQRSFSFQSRHIHHFTLDESPLPNSIALPSDTLQAFKAGKKMIFQHLVKITKDHEQILLLHKGGPEGEWVRSFNIPHATVQNLNDLCCPSVEKLVLKKKDYISSSIGCPKHIQGSNHCPVFECHVLFKWIQENTSIVQGVLERPSLPYEKAVLFIEHRINMVDNHPFKKDSIKQNQKKKNWIATQFVQHGIYVDNGILGRIYNKYSLF</sequence>
<proteinExistence type="inferred from homology"/>
<organism>
    <name type="scientific">African swine fever virus (isolate Warthog/Namibia/Wart80/1980)</name>
    <name type="common">ASFV</name>
    <dbReference type="NCBI Taxonomy" id="561444"/>
    <lineage>
        <taxon>Viruses</taxon>
        <taxon>Varidnaviria</taxon>
        <taxon>Bamfordvirae</taxon>
        <taxon>Nucleocytoviricota</taxon>
        <taxon>Pokkesviricetes</taxon>
        <taxon>Asfuvirales</taxon>
        <taxon>Asfarviridae</taxon>
        <taxon>Asfivirus</taxon>
        <taxon>African swine fever virus</taxon>
    </lineage>
</organism>
<accession>P0CAC7</accession>
<feature type="chain" id="PRO_0000373628" description="Protein I267L">
    <location>
        <begin position="1"/>
        <end position="267"/>
    </location>
</feature>
<comment type="induction">
    <text evidence="1">Expressed in the early phase of the viral replicative cycle.</text>
</comment>
<comment type="similarity">
    <text evidence="1">Belongs to the asfivirus I267L family.</text>
</comment>
<evidence type="ECO:0000305" key="1"/>
<organismHost>
    <name type="scientific">Ornithodoros</name>
    <name type="common">relapsing fever ticks</name>
    <dbReference type="NCBI Taxonomy" id="6937"/>
</organismHost>
<organismHost>
    <name type="scientific">Phacochoerus aethiopicus</name>
    <name type="common">Warthog</name>
    <dbReference type="NCBI Taxonomy" id="85517"/>
</organismHost>
<organismHost>
    <name type="scientific">Phacochoerus africanus</name>
    <name type="common">Warthog</name>
    <dbReference type="NCBI Taxonomy" id="41426"/>
</organismHost>
<organismHost>
    <name type="scientific">Potamochoerus larvatus</name>
    <name type="common">Bushpig</name>
    <dbReference type="NCBI Taxonomy" id="273792"/>
</organismHost>
<organismHost>
    <name type="scientific">Sus scrofa</name>
    <name type="common">Pig</name>
    <dbReference type="NCBI Taxonomy" id="9823"/>
</organismHost>